<dbReference type="EC" id="2.7.1.71" evidence="1"/>
<dbReference type="EMBL" id="CP000611">
    <property type="protein sequence ID" value="ABQ74338.1"/>
    <property type="molecule type" value="Genomic_DNA"/>
</dbReference>
<dbReference type="RefSeq" id="WP_003413021.1">
    <property type="nucleotide sequence ID" value="NZ_CP016972.1"/>
</dbReference>
<dbReference type="SMR" id="A5U5N8"/>
<dbReference type="KEGG" id="mra:MRA_2567"/>
<dbReference type="eggNOG" id="COG0703">
    <property type="taxonomic scope" value="Bacteria"/>
</dbReference>
<dbReference type="HOGENOM" id="CLU_057607_3_3_11"/>
<dbReference type="UniPathway" id="UPA00053">
    <property type="reaction ID" value="UER00088"/>
</dbReference>
<dbReference type="Proteomes" id="UP000001988">
    <property type="component" value="Chromosome"/>
</dbReference>
<dbReference type="GO" id="GO:0005829">
    <property type="term" value="C:cytosol"/>
    <property type="evidence" value="ECO:0007669"/>
    <property type="project" value="TreeGrafter"/>
</dbReference>
<dbReference type="GO" id="GO:0005524">
    <property type="term" value="F:ATP binding"/>
    <property type="evidence" value="ECO:0007669"/>
    <property type="project" value="UniProtKB-UniRule"/>
</dbReference>
<dbReference type="GO" id="GO:0000287">
    <property type="term" value="F:magnesium ion binding"/>
    <property type="evidence" value="ECO:0007669"/>
    <property type="project" value="UniProtKB-UniRule"/>
</dbReference>
<dbReference type="GO" id="GO:0004765">
    <property type="term" value="F:shikimate kinase activity"/>
    <property type="evidence" value="ECO:0007669"/>
    <property type="project" value="UniProtKB-UniRule"/>
</dbReference>
<dbReference type="GO" id="GO:0008652">
    <property type="term" value="P:amino acid biosynthetic process"/>
    <property type="evidence" value="ECO:0007669"/>
    <property type="project" value="UniProtKB-KW"/>
</dbReference>
<dbReference type="GO" id="GO:0009073">
    <property type="term" value="P:aromatic amino acid family biosynthetic process"/>
    <property type="evidence" value="ECO:0007669"/>
    <property type="project" value="UniProtKB-KW"/>
</dbReference>
<dbReference type="GO" id="GO:0009423">
    <property type="term" value="P:chorismate biosynthetic process"/>
    <property type="evidence" value="ECO:0007669"/>
    <property type="project" value="UniProtKB-UniRule"/>
</dbReference>
<dbReference type="CDD" id="cd00464">
    <property type="entry name" value="SK"/>
    <property type="match status" value="1"/>
</dbReference>
<dbReference type="FunFam" id="3.40.50.300:FF:002320">
    <property type="entry name" value="Shikimate kinase"/>
    <property type="match status" value="1"/>
</dbReference>
<dbReference type="Gene3D" id="3.40.50.300">
    <property type="entry name" value="P-loop containing nucleotide triphosphate hydrolases"/>
    <property type="match status" value="1"/>
</dbReference>
<dbReference type="HAMAP" id="MF_00109">
    <property type="entry name" value="Shikimate_kinase"/>
    <property type="match status" value="1"/>
</dbReference>
<dbReference type="InterPro" id="IPR027417">
    <property type="entry name" value="P-loop_NTPase"/>
</dbReference>
<dbReference type="InterPro" id="IPR031322">
    <property type="entry name" value="Shikimate/glucono_kinase"/>
</dbReference>
<dbReference type="InterPro" id="IPR000623">
    <property type="entry name" value="Shikimate_kinase/TSH1"/>
</dbReference>
<dbReference type="InterPro" id="IPR023000">
    <property type="entry name" value="Shikimate_kinase_CS"/>
</dbReference>
<dbReference type="PANTHER" id="PTHR21087">
    <property type="entry name" value="SHIKIMATE KINASE"/>
    <property type="match status" value="1"/>
</dbReference>
<dbReference type="PANTHER" id="PTHR21087:SF16">
    <property type="entry name" value="SHIKIMATE KINASE 1, CHLOROPLASTIC"/>
    <property type="match status" value="1"/>
</dbReference>
<dbReference type="Pfam" id="PF01202">
    <property type="entry name" value="SKI"/>
    <property type="match status" value="1"/>
</dbReference>
<dbReference type="PRINTS" id="PR01100">
    <property type="entry name" value="SHIKIMTKNASE"/>
</dbReference>
<dbReference type="SUPFAM" id="SSF52540">
    <property type="entry name" value="P-loop containing nucleoside triphosphate hydrolases"/>
    <property type="match status" value="1"/>
</dbReference>
<dbReference type="PROSITE" id="PS01128">
    <property type="entry name" value="SHIKIMATE_KINASE"/>
    <property type="match status" value="1"/>
</dbReference>
<name>AROK_MYCTA</name>
<proteinExistence type="inferred from homology"/>
<evidence type="ECO:0000255" key="1">
    <source>
        <dbReference type="HAMAP-Rule" id="MF_00109"/>
    </source>
</evidence>
<organism>
    <name type="scientific">Mycobacterium tuberculosis (strain ATCC 25177 / H37Ra)</name>
    <dbReference type="NCBI Taxonomy" id="419947"/>
    <lineage>
        <taxon>Bacteria</taxon>
        <taxon>Bacillati</taxon>
        <taxon>Actinomycetota</taxon>
        <taxon>Actinomycetes</taxon>
        <taxon>Mycobacteriales</taxon>
        <taxon>Mycobacteriaceae</taxon>
        <taxon>Mycobacterium</taxon>
        <taxon>Mycobacterium tuberculosis complex</taxon>
    </lineage>
</organism>
<keyword id="KW-0028">Amino-acid biosynthesis</keyword>
<keyword id="KW-0057">Aromatic amino acid biosynthesis</keyword>
<keyword id="KW-0067">ATP-binding</keyword>
<keyword id="KW-0963">Cytoplasm</keyword>
<keyword id="KW-0418">Kinase</keyword>
<keyword id="KW-0460">Magnesium</keyword>
<keyword id="KW-0479">Metal-binding</keyword>
<keyword id="KW-0547">Nucleotide-binding</keyword>
<keyword id="KW-1185">Reference proteome</keyword>
<keyword id="KW-0808">Transferase</keyword>
<reference key="1">
    <citation type="journal article" date="2008" name="PLoS ONE">
        <title>Genetic basis of virulence attenuation revealed by comparative genomic analysis of Mycobacterium tuberculosis strain H37Ra versus H37Rv.</title>
        <authorList>
            <person name="Zheng H."/>
            <person name="Lu L."/>
            <person name="Wang B."/>
            <person name="Pu S."/>
            <person name="Zhang X."/>
            <person name="Zhu G."/>
            <person name="Shi W."/>
            <person name="Zhang L."/>
            <person name="Wang H."/>
            <person name="Wang S."/>
            <person name="Zhao G."/>
            <person name="Zhang Y."/>
        </authorList>
    </citation>
    <scope>NUCLEOTIDE SEQUENCE [LARGE SCALE GENOMIC DNA]</scope>
    <source>
        <strain>ATCC 25177 / H37Ra</strain>
    </source>
</reference>
<comment type="function">
    <text evidence="1">Catalyzes the specific phosphorylation of the 3-hydroxyl group of shikimic acid using ATP as a cosubstrate.</text>
</comment>
<comment type="catalytic activity">
    <reaction evidence="1">
        <text>shikimate + ATP = 3-phosphoshikimate + ADP + H(+)</text>
        <dbReference type="Rhea" id="RHEA:13121"/>
        <dbReference type="ChEBI" id="CHEBI:15378"/>
        <dbReference type="ChEBI" id="CHEBI:30616"/>
        <dbReference type="ChEBI" id="CHEBI:36208"/>
        <dbReference type="ChEBI" id="CHEBI:145989"/>
        <dbReference type="ChEBI" id="CHEBI:456216"/>
        <dbReference type="EC" id="2.7.1.71"/>
    </reaction>
</comment>
<comment type="cofactor">
    <cofactor evidence="1">
        <name>Mg(2+)</name>
        <dbReference type="ChEBI" id="CHEBI:18420"/>
    </cofactor>
    <text evidence="1">Binds 1 Mg(2+) ion per subunit.</text>
</comment>
<comment type="pathway">
    <text evidence="1">Metabolic intermediate biosynthesis; chorismate biosynthesis; chorismate from D-erythrose 4-phosphate and phosphoenolpyruvate: step 5/7.</text>
</comment>
<comment type="subunit">
    <text evidence="1">Monomer.</text>
</comment>
<comment type="subcellular location">
    <subcellularLocation>
        <location evidence="1">Cytoplasm</location>
    </subcellularLocation>
</comment>
<comment type="similarity">
    <text evidence="1">Belongs to the shikimate kinase family.</text>
</comment>
<accession>A5U5N8</accession>
<protein>
    <recommendedName>
        <fullName evidence="1">Shikimate kinase</fullName>
        <shortName evidence="1">SK</shortName>
        <ecNumber evidence="1">2.7.1.71</ecNumber>
    </recommendedName>
</protein>
<gene>
    <name evidence="1" type="primary">aroK</name>
    <name type="ordered locus">MRA_2567</name>
</gene>
<feature type="chain" id="PRO_1000022982" description="Shikimate kinase">
    <location>
        <begin position="1"/>
        <end position="176"/>
    </location>
</feature>
<feature type="binding site" evidence="1">
    <location>
        <begin position="12"/>
        <end position="17"/>
    </location>
    <ligand>
        <name>ATP</name>
        <dbReference type="ChEBI" id="CHEBI:30616"/>
    </ligand>
</feature>
<feature type="binding site" evidence="1">
    <location>
        <position position="16"/>
    </location>
    <ligand>
        <name>Mg(2+)</name>
        <dbReference type="ChEBI" id="CHEBI:18420"/>
    </ligand>
</feature>
<feature type="binding site" evidence="1">
    <location>
        <position position="34"/>
    </location>
    <ligand>
        <name>substrate</name>
    </ligand>
</feature>
<feature type="binding site" evidence="1">
    <location>
        <position position="58"/>
    </location>
    <ligand>
        <name>substrate</name>
    </ligand>
</feature>
<feature type="binding site" evidence="1">
    <location>
        <position position="80"/>
    </location>
    <ligand>
        <name>substrate</name>
    </ligand>
</feature>
<feature type="binding site" evidence="1">
    <location>
        <position position="117"/>
    </location>
    <ligand>
        <name>ATP</name>
        <dbReference type="ChEBI" id="CHEBI:30616"/>
    </ligand>
</feature>
<feature type="binding site" evidence="1">
    <location>
        <position position="136"/>
    </location>
    <ligand>
        <name>substrate</name>
    </ligand>
</feature>
<feature type="binding site" evidence="1">
    <location>
        <position position="153"/>
    </location>
    <ligand>
        <name>ATP</name>
        <dbReference type="ChEBI" id="CHEBI:30616"/>
    </ligand>
</feature>
<sequence length="176" mass="18583">MAPKAVLVGLPGSGKSTIGRRLAKALGVGLLDTDVAIEQRTGRSIADIFATDGEQEFRRIEEDVVRAALADHDGVLSLGGGAVTSPGVRAALAGHTVVYLEISAAEGVRRTGGNTVRPLLAGPDRAEKYRALMAKRAPLYRRVATMRVDTNRRNPGAVVRHILSRLQVPSPSEAAT</sequence>